<feature type="chain" id="PRO_0000415883" description="Putative membrane protein PmrR">
    <location>
        <begin position="1"/>
        <end position="29"/>
    </location>
</feature>
<feature type="transmembrane region" description="Helical" evidence="1">
    <location>
        <begin position="5"/>
        <end position="27"/>
    </location>
</feature>
<name>PMRR_ECOLI</name>
<evidence type="ECO:0000255" key="1"/>
<evidence type="ECO:0000305" key="2"/>
<sequence length="29" mass="3465">MKNRVYESLTTVFSVLVVSSFLYIWFATY</sequence>
<reference key="1">
    <citation type="journal article" date="1993" name="J. Mol. Biol.">
        <title>Isolation and sequencing of Escherichia coli gene proP reveals unusual structural features of the osmoregulatory proline/betaine transporter, ProP.</title>
        <authorList>
            <person name="Culham D.E."/>
            <person name="Lasby B."/>
            <person name="Marangoni A.G."/>
            <person name="Milner J.L."/>
            <person name="Steer B.A."/>
            <person name="van Nues R.W."/>
            <person name="Wood J.M."/>
        </authorList>
    </citation>
    <scope>NUCLEOTIDE SEQUENCE [GENOMIC DNA]</scope>
    <source>
        <strain>K12</strain>
    </source>
</reference>
<reference key="2">
    <citation type="journal article" date="1995" name="Nucleic Acids Res.">
        <title>Analysis of the Escherichia coli genome VI: DNA sequence of the region from 92.8 through 100 minutes.</title>
        <authorList>
            <person name="Burland V.D."/>
            <person name="Plunkett G. III"/>
            <person name="Sofia H.J."/>
            <person name="Daniels D.L."/>
            <person name="Blattner F.R."/>
        </authorList>
    </citation>
    <scope>NUCLEOTIDE SEQUENCE [LARGE SCALE GENOMIC DNA]</scope>
    <source>
        <strain>K12 / MG1655 / ATCC 47076</strain>
    </source>
</reference>
<reference key="3">
    <citation type="journal article" date="1997" name="Science">
        <title>The complete genome sequence of Escherichia coli K-12.</title>
        <authorList>
            <person name="Blattner F.R."/>
            <person name="Plunkett G. III"/>
            <person name="Bloch C.A."/>
            <person name="Perna N.T."/>
            <person name="Burland V."/>
            <person name="Riley M."/>
            <person name="Collado-Vides J."/>
            <person name="Glasner J.D."/>
            <person name="Rode C.K."/>
            <person name="Mayhew G.F."/>
            <person name="Gregor J."/>
            <person name="Davis N.W."/>
            <person name="Kirkpatrick H.A."/>
            <person name="Goeden M.A."/>
            <person name="Rose D.J."/>
            <person name="Mau B."/>
            <person name="Shao Y."/>
        </authorList>
    </citation>
    <scope>NUCLEOTIDE SEQUENCE [LARGE SCALE GENOMIC DNA]</scope>
    <source>
        <strain>K12 / MG1655 / ATCC 47076</strain>
    </source>
</reference>
<reference key="4">
    <citation type="journal article" date="2006" name="Mol. Syst. Biol.">
        <title>Highly accurate genome sequences of Escherichia coli K-12 strains MG1655 and W3110.</title>
        <authorList>
            <person name="Hayashi K."/>
            <person name="Morooka N."/>
            <person name="Yamamoto Y."/>
            <person name="Fujita K."/>
            <person name="Isono K."/>
            <person name="Choi S."/>
            <person name="Ohtsubo E."/>
            <person name="Baba T."/>
            <person name="Wanner B.L."/>
            <person name="Mori H."/>
            <person name="Horiuchi T."/>
        </authorList>
    </citation>
    <scope>NUCLEOTIDE SEQUENCE [LARGE SCALE GENOMIC DNA]</scope>
    <source>
        <strain>K12 / W3110 / ATCC 27325 / DSM 5911</strain>
    </source>
</reference>
<reference key="5">
    <citation type="submission" date="2011-09" db="EMBL/GenBank/DDBJ databases">
        <authorList>
            <person name="Rudd K.E."/>
        </authorList>
    </citation>
    <scope>IDENTIFICATION</scope>
    <source>
        <strain>K12 / MG1655 / ATCC 47076</strain>
    </source>
</reference>
<dbReference type="EMBL" id="M83089">
    <property type="status" value="NOT_ANNOTATED_CDS"/>
    <property type="molecule type" value="Genomic_DNA"/>
</dbReference>
<dbReference type="EMBL" id="U14003">
    <property type="status" value="NOT_ANNOTATED_CDS"/>
    <property type="molecule type" value="Genomic_DNA"/>
</dbReference>
<dbReference type="EMBL" id="U00096">
    <property type="protein sequence ID" value="AEN84234.1"/>
    <property type="molecule type" value="Genomic_DNA"/>
</dbReference>
<dbReference type="EMBL" id="AP009048">
    <property type="status" value="NOT_ANNOTATED_CDS"/>
    <property type="molecule type" value="Genomic_DNA"/>
</dbReference>
<dbReference type="RefSeq" id="WP_000797657.1">
    <property type="nucleotide sequence ID" value="NZ_SSZK01000018.1"/>
</dbReference>
<dbReference type="RefSeq" id="YP_004831120.1">
    <property type="nucleotide sequence ID" value="NC_000913.3"/>
</dbReference>
<dbReference type="SMR" id="G3MTW7"/>
<dbReference type="STRING" id="511145.b4703"/>
<dbReference type="PaxDb" id="511145-b4703"/>
<dbReference type="EnsemblBacteria" id="AEN84234">
    <property type="protein sequence ID" value="AEN84234"/>
    <property type="gene ID" value="b4703"/>
</dbReference>
<dbReference type="GeneID" id="11115379"/>
<dbReference type="GeneID" id="86861500"/>
<dbReference type="KEGG" id="eco:b4703"/>
<dbReference type="KEGG" id="ecoc:C3026_22215"/>
<dbReference type="InParanoid" id="G3MTW7"/>
<dbReference type="BioCyc" id="EcoCyc:MONOMER0-4214"/>
<dbReference type="BioCyc" id="MetaCyc:MONOMER0-4214"/>
<dbReference type="PRO" id="PR:G3MTW7"/>
<dbReference type="Proteomes" id="UP000000625">
    <property type="component" value="Chromosome"/>
</dbReference>
<dbReference type="GO" id="GO:0005886">
    <property type="term" value="C:plasma membrane"/>
    <property type="evidence" value="ECO:0007669"/>
    <property type="project" value="UniProtKB-SubCell"/>
</dbReference>
<dbReference type="GO" id="GO:0004857">
    <property type="term" value="F:enzyme inhibitor activity"/>
    <property type="evidence" value="ECO:0000314"/>
    <property type="project" value="EcoCyc"/>
</dbReference>
<dbReference type="InterPro" id="IPR049795">
    <property type="entry name" value="PmrR"/>
</dbReference>
<dbReference type="NCBIfam" id="NF033224">
    <property type="entry name" value="PmrR"/>
    <property type="match status" value="1"/>
</dbReference>
<organism>
    <name type="scientific">Escherichia coli (strain K12)</name>
    <dbReference type="NCBI Taxonomy" id="83333"/>
    <lineage>
        <taxon>Bacteria</taxon>
        <taxon>Pseudomonadati</taxon>
        <taxon>Pseudomonadota</taxon>
        <taxon>Gammaproteobacteria</taxon>
        <taxon>Enterobacterales</taxon>
        <taxon>Enterobacteriaceae</taxon>
        <taxon>Escherichia</taxon>
    </lineage>
</organism>
<keyword id="KW-0997">Cell inner membrane</keyword>
<keyword id="KW-1003">Cell membrane</keyword>
<keyword id="KW-0472">Membrane</keyword>
<keyword id="KW-1185">Reference proteome</keyword>
<keyword id="KW-0812">Transmembrane</keyword>
<keyword id="KW-1133">Transmembrane helix</keyword>
<protein>
    <recommendedName>
        <fullName>Putative membrane protein PmrR</fullName>
    </recommendedName>
</protein>
<accession>G3MTW7</accession>
<proteinExistence type="predicted"/>
<comment type="function">
    <text evidence="2">May bind to BasS and modulate its sensor kinase activity.</text>
</comment>
<comment type="subcellular location">
    <subcellularLocation>
        <location evidence="2">Cell inner membrane</location>
        <topology evidence="2">Single-pass membrane protein</topology>
    </subcellularLocation>
</comment>
<gene>
    <name type="primary">pmrR</name>
    <name type="ordered locus">b4703</name>
    <name type="ordered locus">JW4072.1</name>
</gene>